<feature type="chain" id="PRO_1000060053" description="tRNA modification GTPase MnmE">
    <location>
        <begin position="1"/>
        <end position="453"/>
    </location>
</feature>
<feature type="domain" description="TrmE-type G">
    <location>
        <begin position="215"/>
        <end position="376"/>
    </location>
</feature>
<feature type="binding site" evidence="1">
    <location>
        <position position="22"/>
    </location>
    <ligand>
        <name>(6S)-5-formyl-5,6,7,8-tetrahydrofolate</name>
        <dbReference type="ChEBI" id="CHEBI:57457"/>
    </ligand>
</feature>
<feature type="binding site" evidence="1">
    <location>
        <position position="79"/>
    </location>
    <ligand>
        <name>(6S)-5-formyl-5,6,7,8-tetrahydrofolate</name>
        <dbReference type="ChEBI" id="CHEBI:57457"/>
    </ligand>
</feature>
<feature type="binding site" evidence="1">
    <location>
        <position position="119"/>
    </location>
    <ligand>
        <name>(6S)-5-formyl-5,6,7,8-tetrahydrofolate</name>
        <dbReference type="ChEBI" id="CHEBI:57457"/>
    </ligand>
</feature>
<feature type="binding site" evidence="1">
    <location>
        <begin position="225"/>
        <end position="230"/>
    </location>
    <ligand>
        <name>GTP</name>
        <dbReference type="ChEBI" id="CHEBI:37565"/>
    </ligand>
</feature>
<feature type="binding site" evidence="1">
    <location>
        <position position="225"/>
    </location>
    <ligand>
        <name>K(+)</name>
        <dbReference type="ChEBI" id="CHEBI:29103"/>
    </ligand>
</feature>
<feature type="binding site" evidence="1">
    <location>
        <position position="229"/>
    </location>
    <ligand>
        <name>Mg(2+)</name>
        <dbReference type="ChEBI" id="CHEBI:18420"/>
    </ligand>
</feature>
<feature type="binding site" evidence="1">
    <location>
        <begin position="244"/>
        <end position="250"/>
    </location>
    <ligand>
        <name>GTP</name>
        <dbReference type="ChEBI" id="CHEBI:37565"/>
    </ligand>
</feature>
<feature type="binding site" evidence="1">
    <location>
        <position position="244"/>
    </location>
    <ligand>
        <name>K(+)</name>
        <dbReference type="ChEBI" id="CHEBI:29103"/>
    </ligand>
</feature>
<feature type="binding site" evidence="1">
    <location>
        <position position="246"/>
    </location>
    <ligand>
        <name>K(+)</name>
        <dbReference type="ChEBI" id="CHEBI:29103"/>
    </ligand>
</feature>
<feature type="binding site" evidence="1">
    <location>
        <position position="249"/>
    </location>
    <ligand>
        <name>K(+)</name>
        <dbReference type="ChEBI" id="CHEBI:29103"/>
    </ligand>
</feature>
<feature type="binding site" evidence="1">
    <location>
        <position position="250"/>
    </location>
    <ligand>
        <name>Mg(2+)</name>
        <dbReference type="ChEBI" id="CHEBI:18420"/>
    </ligand>
</feature>
<feature type="binding site" evidence="1">
    <location>
        <begin position="269"/>
        <end position="272"/>
    </location>
    <ligand>
        <name>GTP</name>
        <dbReference type="ChEBI" id="CHEBI:37565"/>
    </ligand>
</feature>
<feature type="binding site" evidence="1">
    <location>
        <begin position="334"/>
        <end position="337"/>
    </location>
    <ligand>
        <name>GTP</name>
        <dbReference type="ChEBI" id="CHEBI:37565"/>
    </ligand>
</feature>
<feature type="binding site" evidence="1">
    <location>
        <position position="453"/>
    </location>
    <ligand>
        <name>(6S)-5-formyl-5,6,7,8-tetrahydrofolate</name>
        <dbReference type="ChEBI" id="CHEBI:57457"/>
    </ligand>
</feature>
<sequence>MTTDTIVAQATAPGRGGVGIIRISGDKATDVAMAVLGHLPKTRYADYCDFKNATGQVIDQGIALFFKGPNSFTGEDVLELQGHGGQIVLDMLIKRVLEVEGIRIAKPGEFSEQAFMNDKLDLTQAEAIADLIDATSEQAAKSALQSLQGEFSKEVHELVDQVTNLRLYVEAAIDFPDEEVDFLSDGKIANALYKIIDKLSTVQASAKQGSIIREGMKVVIAGRPNAGKSSLLNALAGKESAIVTEIAGTTRDVLREHIHLDGMPLHIIDTAGLRDTTDTVEQIGIERAWNEINSADRVLFMVDGTTTDAVDPHDIWPDFINRLPANLGVTVIRNKADLTGENLDMTEEKGYSVYRISAKTGLGVDELKLHLKSLMGYQSNLEGGFIARRRHLEALDVAASHLQLGKEQLEVYLAGELLAEELRMAQLALSEITGRFTSDDLLGKIFSSFCIGK</sequence>
<name>MNME_SHEPC</name>
<protein>
    <recommendedName>
        <fullName evidence="1">tRNA modification GTPase MnmE</fullName>
        <ecNumber evidence="1">3.6.-.-</ecNumber>
    </recommendedName>
</protein>
<proteinExistence type="inferred from homology"/>
<dbReference type="EC" id="3.6.-.-" evidence="1"/>
<dbReference type="EMBL" id="CP000681">
    <property type="protein sequence ID" value="ABP77704.1"/>
    <property type="molecule type" value="Genomic_DNA"/>
</dbReference>
<dbReference type="SMR" id="A4YCM1"/>
<dbReference type="STRING" id="319224.Sputcn32_4001"/>
<dbReference type="KEGG" id="spc:Sputcn32_4001"/>
<dbReference type="eggNOG" id="COG0486">
    <property type="taxonomic scope" value="Bacteria"/>
</dbReference>
<dbReference type="HOGENOM" id="CLU_019624_4_1_6"/>
<dbReference type="GO" id="GO:0005829">
    <property type="term" value="C:cytosol"/>
    <property type="evidence" value="ECO:0007669"/>
    <property type="project" value="TreeGrafter"/>
</dbReference>
<dbReference type="GO" id="GO:0005525">
    <property type="term" value="F:GTP binding"/>
    <property type="evidence" value="ECO:0007669"/>
    <property type="project" value="UniProtKB-UniRule"/>
</dbReference>
<dbReference type="GO" id="GO:0003924">
    <property type="term" value="F:GTPase activity"/>
    <property type="evidence" value="ECO:0007669"/>
    <property type="project" value="UniProtKB-UniRule"/>
</dbReference>
<dbReference type="GO" id="GO:0046872">
    <property type="term" value="F:metal ion binding"/>
    <property type="evidence" value="ECO:0007669"/>
    <property type="project" value="UniProtKB-KW"/>
</dbReference>
<dbReference type="GO" id="GO:0030488">
    <property type="term" value="P:tRNA methylation"/>
    <property type="evidence" value="ECO:0007669"/>
    <property type="project" value="TreeGrafter"/>
</dbReference>
<dbReference type="GO" id="GO:0002098">
    <property type="term" value="P:tRNA wobble uridine modification"/>
    <property type="evidence" value="ECO:0007669"/>
    <property type="project" value="TreeGrafter"/>
</dbReference>
<dbReference type="CDD" id="cd04164">
    <property type="entry name" value="trmE"/>
    <property type="match status" value="1"/>
</dbReference>
<dbReference type="CDD" id="cd14858">
    <property type="entry name" value="TrmE_N"/>
    <property type="match status" value="1"/>
</dbReference>
<dbReference type="FunFam" id="3.30.1360.120:FF:000001">
    <property type="entry name" value="tRNA modification GTPase MnmE"/>
    <property type="match status" value="1"/>
</dbReference>
<dbReference type="FunFam" id="3.40.50.300:FF:000249">
    <property type="entry name" value="tRNA modification GTPase MnmE"/>
    <property type="match status" value="1"/>
</dbReference>
<dbReference type="Gene3D" id="3.40.50.300">
    <property type="entry name" value="P-loop containing nucleotide triphosphate hydrolases"/>
    <property type="match status" value="1"/>
</dbReference>
<dbReference type="Gene3D" id="3.30.1360.120">
    <property type="entry name" value="Probable tRNA modification gtpase trme, domain 1"/>
    <property type="match status" value="1"/>
</dbReference>
<dbReference type="Gene3D" id="1.20.120.430">
    <property type="entry name" value="tRNA modification GTPase MnmE domain 2"/>
    <property type="match status" value="1"/>
</dbReference>
<dbReference type="HAMAP" id="MF_00379">
    <property type="entry name" value="GTPase_MnmE"/>
    <property type="match status" value="1"/>
</dbReference>
<dbReference type="InterPro" id="IPR031168">
    <property type="entry name" value="G_TrmE"/>
</dbReference>
<dbReference type="InterPro" id="IPR006073">
    <property type="entry name" value="GTP-bd"/>
</dbReference>
<dbReference type="InterPro" id="IPR018948">
    <property type="entry name" value="GTP-bd_TrmE_N"/>
</dbReference>
<dbReference type="InterPro" id="IPR004520">
    <property type="entry name" value="GTPase_MnmE"/>
</dbReference>
<dbReference type="InterPro" id="IPR027368">
    <property type="entry name" value="MnmE_dom2"/>
</dbReference>
<dbReference type="InterPro" id="IPR025867">
    <property type="entry name" value="MnmE_helical"/>
</dbReference>
<dbReference type="InterPro" id="IPR027417">
    <property type="entry name" value="P-loop_NTPase"/>
</dbReference>
<dbReference type="InterPro" id="IPR005225">
    <property type="entry name" value="Small_GTP-bd"/>
</dbReference>
<dbReference type="InterPro" id="IPR027266">
    <property type="entry name" value="TrmE/GcvT_dom1"/>
</dbReference>
<dbReference type="NCBIfam" id="TIGR00450">
    <property type="entry name" value="mnmE_trmE_thdF"/>
    <property type="match status" value="1"/>
</dbReference>
<dbReference type="NCBIfam" id="NF003661">
    <property type="entry name" value="PRK05291.1-3"/>
    <property type="match status" value="1"/>
</dbReference>
<dbReference type="NCBIfam" id="TIGR00231">
    <property type="entry name" value="small_GTP"/>
    <property type="match status" value="1"/>
</dbReference>
<dbReference type="PANTHER" id="PTHR42714">
    <property type="entry name" value="TRNA MODIFICATION GTPASE GTPBP3"/>
    <property type="match status" value="1"/>
</dbReference>
<dbReference type="PANTHER" id="PTHR42714:SF2">
    <property type="entry name" value="TRNA MODIFICATION GTPASE GTPBP3, MITOCHONDRIAL"/>
    <property type="match status" value="1"/>
</dbReference>
<dbReference type="Pfam" id="PF01926">
    <property type="entry name" value="MMR_HSR1"/>
    <property type="match status" value="1"/>
</dbReference>
<dbReference type="Pfam" id="PF12631">
    <property type="entry name" value="MnmE_helical"/>
    <property type="match status" value="1"/>
</dbReference>
<dbReference type="Pfam" id="PF10396">
    <property type="entry name" value="TrmE_N"/>
    <property type="match status" value="1"/>
</dbReference>
<dbReference type="SUPFAM" id="SSF52540">
    <property type="entry name" value="P-loop containing nucleoside triphosphate hydrolases"/>
    <property type="match status" value="1"/>
</dbReference>
<dbReference type="SUPFAM" id="SSF116878">
    <property type="entry name" value="TrmE connector domain"/>
    <property type="match status" value="1"/>
</dbReference>
<dbReference type="PROSITE" id="PS51709">
    <property type="entry name" value="G_TRME"/>
    <property type="match status" value="1"/>
</dbReference>
<evidence type="ECO:0000255" key="1">
    <source>
        <dbReference type="HAMAP-Rule" id="MF_00379"/>
    </source>
</evidence>
<comment type="function">
    <text evidence="1">Exhibits a very high intrinsic GTPase hydrolysis rate. Involved in the addition of a carboxymethylaminomethyl (cmnm) group at the wobble position (U34) of certain tRNAs, forming tRNA-cmnm(5)s(2)U34.</text>
</comment>
<comment type="cofactor">
    <cofactor evidence="1">
        <name>K(+)</name>
        <dbReference type="ChEBI" id="CHEBI:29103"/>
    </cofactor>
    <text evidence="1">Binds 1 potassium ion per subunit.</text>
</comment>
<comment type="subunit">
    <text evidence="1">Homodimer. Heterotetramer of two MnmE and two MnmG subunits.</text>
</comment>
<comment type="subcellular location">
    <subcellularLocation>
        <location evidence="1">Cytoplasm</location>
    </subcellularLocation>
</comment>
<comment type="similarity">
    <text evidence="1">Belongs to the TRAFAC class TrmE-Era-EngA-EngB-Septin-like GTPase superfamily. TrmE GTPase family.</text>
</comment>
<organism>
    <name type="scientific">Shewanella putrefaciens (strain CN-32 / ATCC BAA-453)</name>
    <dbReference type="NCBI Taxonomy" id="319224"/>
    <lineage>
        <taxon>Bacteria</taxon>
        <taxon>Pseudomonadati</taxon>
        <taxon>Pseudomonadota</taxon>
        <taxon>Gammaproteobacteria</taxon>
        <taxon>Alteromonadales</taxon>
        <taxon>Shewanellaceae</taxon>
        <taxon>Shewanella</taxon>
    </lineage>
</organism>
<gene>
    <name evidence="1" type="primary">mnmE</name>
    <name evidence="1" type="synonym">trmE</name>
    <name type="ordered locus">Sputcn32_4001</name>
</gene>
<keyword id="KW-0963">Cytoplasm</keyword>
<keyword id="KW-0342">GTP-binding</keyword>
<keyword id="KW-0378">Hydrolase</keyword>
<keyword id="KW-0460">Magnesium</keyword>
<keyword id="KW-0479">Metal-binding</keyword>
<keyword id="KW-0547">Nucleotide-binding</keyword>
<keyword id="KW-0630">Potassium</keyword>
<keyword id="KW-0819">tRNA processing</keyword>
<reference key="1">
    <citation type="submission" date="2007-04" db="EMBL/GenBank/DDBJ databases">
        <title>Complete sequence of Shewanella putrefaciens CN-32.</title>
        <authorList>
            <consortium name="US DOE Joint Genome Institute"/>
            <person name="Copeland A."/>
            <person name="Lucas S."/>
            <person name="Lapidus A."/>
            <person name="Barry K."/>
            <person name="Detter J.C."/>
            <person name="Glavina del Rio T."/>
            <person name="Hammon N."/>
            <person name="Israni S."/>
            <person name="Dalin E."/>
            <person name="Tice H."/>
            <person name="Pitluck S."/>
            <person name="Chain P."/>
            <person name="Malfatti S."/>
            <person name="Shin M."/>
            <person name="Vergez L."/>
            <person name="Schmutz J."/>
            <person name="Larimer F."/>
            <person name="Land M."/>
            <person name="Hauser L."/>
            <person name="Kyrpides N."/>
            <person name="Mikhailova N."/>
            <person name="Romine M.F."/>
            <person name="Fredrickson J."/>
            <person name="Tiedje J."/>
            <person name="Richardson P."/>
        </authorList>
    </citation>
    <scope>NUCLEOTIDE SEQUENCE [LARGE SCALE GENOMIC DNA]</scope>
    <source>
        <strain>CN-32 / ATCC BAA-453</strain>
    </source>
</reference>
<accession>A4YCM1</accession>